<sequence length="237" mass="26661">MSAKQNGFTFKQFHIDHHRCAMKVGTDGILLGAWADVSQSERILDLGTGTGLIALMLAQRSTKESEIHAVELDQAAYLQAQANVHASPWAQRVHVYQQDAAEFCRNAVNKFDLIVANPPYFPQGVDCATPQRDLARYTATHRHVDWLNWASHCLSEQGKISMVLPFEAGETLLKQTALYCIARCEVITKKGKAPQRLLLTFSLQAQPLQPSQLIIYDESNRYHPDFIGLTKDFYLAF</sequence>
<evidence type="ECO:0000255" key="1">
    <source>
        <dbReference type="HAMAP-Rule" id="MF_01872"/>
    </source>
</evidence>
<organism>
    <name type="scientific">Pasteurella multocida (strain Pm70)</name>
    <dbReference type="NCBI Taxonomy" id="272843"/>
    <lineage>
        <taxon>Bacteria</taxon>
        <taxon>Pseudomonadati</taxon>
        <taxon>Pseudomonadota</taxon>
        <taxon>Gammaproteobacteria</taxon>
        <taxon>Pasteurellales</taxon>
        <taxon>Pasteurellaceae</taxon>
        <taxon>Pasteurella</taxon>
    </lineage>
</organism>
<feature type="chain" id="PRO_0000387393" description="tRNA1(Val) (adenine(37)-N6)-methyltransferase">
    <location>
        <begin position="1"/>
        <end position="237"/>
    </location>
</feature>
<proteinExistence type="inferred from homology"/>
<gene>
    <name type="ordered locus">PM1839</name>
</gene>
<name>TRMN6_PASMU</name>
<accession>Q9CJZ9</accession>
<reference key="1">
    <citation type="journal article" date="2001" name="Proc. Natl. Acad. Sci. U.S.A.">
        <title>Complete genomic sequence of Pasteurella multocida Pm70.</title>
        <authorList>
            <person name="May B.J."/>
            <person name="Zhang Q."/>
            <person name="Li L.L."/>
            <person name="Paustian M.L."/>
            <person name="Whittam T.S."/>
            <person name="Kapur V."/>
        </authorList>
    </citation>
    <scope>NUCLEOTIDE SEQUENCE [LARGE SCALE GENOMIC DNA]</scope>
    <source>
        <strain>Pm70</strain>
    </source>
</reference>
<protein>
    <recommendedName>
        <fullName evidence="1">tRNA1(Val) (adenine(37)-N6)-methyltransferase</fullName>
        <ecNumber evidence="1">2.1.1.223</ecNumber>
    </recommendedName>
    <alternativeName>
        <fullName evidence="1">tRNA m6A37 methyltransferase</fullName>
    </alternativeName>
</protein>
<comment type="function">
    <text evidence="1">Specifically methylates the adenine in position 37 of tRNA(1)(Val) (anticodon cmo5UAC).</text>
</comment>
<comment type="catalytic activity">
    <reaction evidence="1">
        <text>adenosine(37) in tRNA1(Val) + S-adenosyl-L-methionine = N(6)-methyladenosine(37) in tRNA1(Val) + S-adenosyl-L-homocysteine + H(+)</text>
        <dbReference type="Rhea" id="RHEA:43160"/>
        <dbReference type="Rhea" id="RHEA-COMP:10369"/>
        <dbReference type="Rhea" id="RHEA-COMP:10370"/>
        <dbReference type="ChEBI" id="CHEBI:15378"/>
        <dbReference type="ChEBI" id="CHEBI:57856"/>
        <dbReference type="ChEBI" id="CHEBI:59789"/>
        <dbReference type="ChEBI" id="CHEBI:74411"/>
        <dbReference type="ChEBI" id="CHEBI:74449"/>
        <dbReference type="EC" id="2.1.1.223"/>
    </reaction>
</comment>
<comment type="subcellular location">
    <subcellularLocation>
        <location evidence="1">Cytoplasm</location>
    </subcellularLocation>
</comment>
<comment type="similarity">
    <text evidence="1">Belongs to the methyltransferase superfamily. tRNA (adenine-N(6)-)-methyltransferase family.</text>
</comment>
<dbReference type="EC" id="2.1.1.223" evidence="1"/>
<dbReference type="EMBL" id="AE004439">
    <property type="protein sequence ID" value="AAK03923.1"/>
    <property type="molecule type" value="Genomic_DNA"/>
</dbReference>
<dbReference type="RefSeq" id="WP_010907372.1">
    <property type="nucleotide sequence ID" value="NC_002663.1"/>
</dbReference>
<dbReference type="SMR" id="Q9CJZ9"/>
<dbReference type="STRING" id="272843.PM1839"/>
<dbReference type="EnsemblBacteria" id="AAK03923">
    <property type="protein sequence ID" value="AAK03923"/>
    <property type="gene ID" value="PM1839"/>
</dbReference>
<dbReference type="KEGG" id="pmu:PM1839"/>
<dbReference type="PATRIC" id="fig|272843.6.peg.1863"/>
<dbReference type="HOGENOM" id="CLU_061983_0_0_6"/>
<dbReference type="OrthoDB" id="5383291at2"/>
<dbReference type="Proteomes" id="UP000000809">
    <property type="component" value="Chromosome"/>
</dbReference>
<dbReference type="GO" id="GO:0005737">
    <property type="term" value="C:cytoplasm"/>
    <property type="evidence" value="ECO:0007669"/>
    <property type="project" value="UniProtKB-SubCell"/>
</dbReference>
<dbReference type="GO" id="GO:0003676">
    <property type="term" value="F:nucleic acid binding"/>
    <property type="evidence" value="ECO:0007669"/>
    <property type="project" value="InterPro"/>
</dbReference>
<dbReference type="GO" id="GO:0016430">
    <property type="term" value="F:tRNA (adenine-N6)-methyltransferase activity"/>
    <property type="evidence" value="ECO:0007669"/>
    <property type="project" value="UniProtKB-UniRule"/>
</dbReference>
<dbReference type="GO" id="GO:0032259">
    <property type="term" value="P:methylation"/>
    <property type="evidence" value="ECO:0007669"/>
    <property type="project" value="UniProtKB-KW"/>
</dbReference>
<dbReference type="GO" id="GO:0008033">
    <property type="term" value="P:tRNA processing"/>
    <property type="evidence" value="ECO:0007669"/>
    <property type="project" value="UniProtKB-UniRule"/>
</dbReference>
<dbReference type="CDD" id="cd02440">
    <property type="entry name" value="AdoMet_MTases"/>
    <property type="match status" value="1"/>
</dbReference>
<dbReference type="Gene3D" id="3.40.50.150">
    <property type="entry name" value="Vaccinia Virus protein VP39"/>
    <property type="match status" value="1"/>
</dbReference>
<dbReference type="HAMAP" id="MF_01872">
    <property type="entry name" value="tRNA_methyltr_YfiC"/>
    <property type="match status" value="1"/>
</dbReference>
<dbReference type="InterPro" id="IPR002052">
    <property type="entry name" value="DNA_methylase_N6_adenine_CS"/>
</dbReference>
<dbReference type="InterPro" id="IPR029063">
    <property type="entry name" value="SAM-dependent_MTases_sf"/>
</dbReference>
<dbReference type="InterPro" id="IPR007848">
    <property type="entry name" value="Small_mtfrase_dom"/>
</dbReference>
<dbReference type="InterPro" id="IPR050210">
    <property type="entry name" value="tRNA_Adenine-N(6)_MTase"/>
</dbReference>
<dbReference type="InterPro" id="IPR022882">
    <property type="entry name" value="tRNA_adenine-N6_MeTrfase"/>
</dbReference>
<dbReference type="PANTHER" id="PTHR47739">
    <property type="entry name" value="TRNA1(VAL) (ADENINE(37)-N6)-METHYLTRANSFERASE"/>
    <property type="match status" value="1"/>
</dbReference>
<dbReference type="PANTHER" id="PTHR47739:SF1">
    <property type="entry name" value="TRNA1(VAL) (ADENINE(37)-N6)-METHYLTRANSFERASE"/>
    <property type="match status" value="1"/>
</dbReference>
<dbReference type="Pfam" id="PF05175">
    <property type="entry name" value="MTS"/>
    <property type="match status" value="1"/>
</dbReference>
<dbReference type="PRINTS" id="PR00507">
    <property type="entry name" value="N12N6MTFRASE"/>
</dbReference>
<dbReference type="SUPFAM" id="SSF53335">
    <property type="entry name" value="S-adenosyl-L-methionine-dependent methyltransferases"/>
    <property type="match status" value="1"/>
</dbReference>
<dbReference type="PROSITE" id="PS00092">
    <property type="entry name" value="N6_MTASE"/>
    <property type="match status" value="1"/>
</dbReference>
<keyword id="KW-0963">Cytoplasm</keyword>
<keyword id="KW-0489">Methyltransferase</keyword>
<keyword id="KW-1185">Reference proteome</keyword>
<keyword id="KW-0949">S-adenosyl-L-methionine</keyword>
<keyword id="KW-0808">Transferase</keyword>
<keyword id="KW-0819">tRNA processing</keyword>